<sequence>MDQDAFFFERDPEAEGEAPRKQESLSDVIGLLDVVLSYKPTEIGEDRSWLHGIIDNPKENKPSCKADDNNKDRAISTPTQDHRSGEESGISRRTSESKTETHARILDQQGIHRASRRGTSPNPLPENMGNERNTRIDEDSPNERRHQRSVLTDEDRKMAEDSNKREEDQVEGFPEEIRRSTPLSDDGESRTNNNGRSMETSSTHSTRITDVIINPSPELEDAVLQRNKRRPTIIRRNQTRSERTQNSELHKSTSENSSNLEDHNTKTSPKGPPPKNEESAATPKNNHNHRKTKYTMNNANNNTKSPPTPEHDTTANEEETSNTSVDEMAKLLVSLGVMKSQHEFELSRSASHVFAKRMLKSANYKEMTFNLCGMLISVEKSLENKVEENRTLLKQIQEEINSSRDLHKRFSEYQKEQNSLMMANLSTLHIITDRGGKTGDPSDTTRSPSVFTKGKDNKVKKTRFDPSMEALGGQEFKPDLIREDELRDDIKNPVLEENNNDLQASNASRLIPSTEKHTLHSLKLVIENSPLSRVEKKAYIKSLYKCRTNQEVKNVMELFEEDIDSLTN</sequence>
<evidence type="ECO:0000250" key="1">
    <source>
        <dbReference type="UniProtKB" id="P04859"/>
    </source>
</evidence>
<evidence type="ECO:0000250" key="2">
    <source>
        <dbReference type="UniProtKB" id="P06162"/>
    </source>
</evidence>
<evidence type="ECO:0000250" key="3">
    <source>
        <dbReference type="UniProtKB" id="Q77M42"/>
    </source>
</evidence>
<evidence type="ECO:0000255" key="4"/>
<evidence type="ECO:0000256" key="5">
    <source>
        <dbReference type="SAM" id="MobiDB-lite"/>
    </source>
</evidence>
<evidence type="ECO:0000305" key="6"/>
<organism>
    <name type="scientific">Human parainfluenza 1 virus (strain C35)</name>
    <name type="common">HPIV-1</name>
    <dbReference type="NCBI Taxonomy" id="31605"/>
    <lineage>
        <taxon>Viruses</taxon>
        <taxon>Riboviria</taxon>
        <taxon>Orthornavirae</taxon>
        <taxon>Negarnaviricota</taxon>
        <taxon>Haploviricotina</taxon>
        <taxon>Monjiviricetes</taxon>
        <taxon>Mononegavirales</taxon>
        <taxon>Paramyxoviridae</taxon>
        <taxon>Feraresvirinae</taxon>
        <taxon>Respirovirus</taxon>
        <taxon>Respirovirus laryngotracheitidis</taxon>
    </lineage>
</organism>
<dbReference type="EMBL" id="M74081">
    <property type="protein sequence ID" value="AAA46834.1"/>
    <property type="molecule type" value="Genomic_RNA"/>
</dbReference>
<dbReference type="PIR" id="A40234">
    <property type="entry name" value="RRNZ35"/>
</dbReference>
<dbReference type="SMR" id="P32530"/>
<dbReference type="GO" id="GO:0003723">
    <property type="term" value="F:RNA binding"/>
    <property type="evidence" value="ECO:0007669"/>
    <property type="project" value="InterPro"/>
</dbReference>
<dbReference type="GO" id="GO:0003968">
    <property type="term" value="F:RNA-directed RNA polymerase activity"/>
    <property type="evidence" value="ECO:0007669"/>
    <property type="project" value="InterPro"/>
</dbReference>
<dbReference type="GO" id="GO:0006351">
    <property type="term" value="P:DNA-templated transcription"/>
    <property type="evidence" value="ECO:0007669"/>
    <property type="project" value="InterPro"/>
</dbReference>
<dbReference type="GO" id="GO:0019079">
    <property type="term" value="P:viral genome replication"/>
    <property type="evidence" value="ECO:0007669"/>
    <property type="project" value="InterPro"/>
</dbReference>
<dbReference type="CDD" id="cd21031">
    <property type="entry name" value="MEV_P-protein-C_like"/>
    <property type="match status" value="1"/>
</dbReference>
<dbReference type="Gene3D" id="1.10.287.340">
    <property type="match status" value="1"/>
</dbReference>
<dbReference type="Gene3D" id="1.10.8.10">
    <property type="entry name" value="DNA helicase RuvA subunit, C-terminal domain"/>
    <property type="match status" value="1"/>
</dbReference>
<dbReference type="Gene3D" id="1.10.287.320">
    <property type="entry name" value="Viral phosphoprotein oligmorisation site domain"/>
    <property type="match status" value="1"/>
</dbReference>
<dbReference type="InterPro" id="IPR002693">
    <property type="entry name" value="Paramyxo_PProtein_C"/>
</dbReference>
<dbReference type="InterPro" id="IPR043097">
    <property type="entry name" value="PProtein_oligomer_dom1"/>
</dbReference>
<dbReference type="InterPro" id="IPR016075">
    <property type="entry name" value="RNA_pol_Pprot-P_XD_paramyxovir"/>
</dbReference>
<dbReference type="Pfam" id="PF01806">
    <property type="entry name" value="Paramyxo_P"/>
    <property type="match status" value="1"/>
</dbReference>
<dbReference type="SUPFAM" id="SSF58034">
    <property type="entry name" value="Multimerization domain of the phosphoprotein from sendai virus"/>
    <property type="match status" value="1"/>
</dbReference>
<dbReference type="SUPFAM" id="SSF101089">
    <property type="entry name" value="Phosphoprotein XD domain"/>
    <property type="match status" value="1"/>
</dbReference>
<organismHost>
    <name type="scientific">Homo sapiens</name>
    <name type="common">Human</name>
    <dbReference type="NCBI Taxonomy" id="9606"/>
</organismHost>
<accession>P32530</accession>
<comment type="function">
    <text evidence="2 3">Essential cofactor of the RNA polymerase L that plays a central role in the transcription and replication by forming the polymerase complex with RNA polymerase L and recruiting L to the genomic N-RNA template for RNA synthesis. Also plays a central role in the encapsidation of nascent RNA chains by forming the encapsidation complex with the nucleocapsid protein N (N-P complex). Acts as a chaperone for newly synthesized free N protein, so-called N0, allowing encapsidation of nascent RNA chains during replication (By similarity). The nucleoprotein protein N prevents excessive phosphorylation of P, which leads to down-regulation of viral transcription/ replication. Participates, together with N, in the formation of viral factories (viroplasms), which are large inclusions in the host cytoplasm where replication takes place (By similarity). Recruits host PI4KB and remodel the host endoplasmic reticulum membrane to form viral replication factories (By similarity).</text>
</comment>
<comment type="subunit">
    <text evidence="1">Homotetramer. Interacts (via multimerization domain) with polymerase L; this interaction forms the polymerase complex. Interacts (via N-terminus) with N0; this interaction allows P to chaperon N0 before encapsidation and form the N-P complex. Interacts (via C-terminus) with N-RNA template; this interaction positions the polymerase on the template.</text>
</comment>
<comment type="domain">
    <text evidence="1 2">The N-terminus consists of a long intrinsically disordered tail (By similarity). The central part contains the coiled-coil multimerization domain (PMD). Forms a four-stranded coiled coil structure. The C-terminus constitutes the alpha-helical domain that binds to the nucleocapsid (N-RNA complex) (By similarity).</text>
</comment>
<comment type="similarity">
    <text evidence="6">Belongs to the respirovirus P protein family.</text>
</comment>
<gene>
    <name type="primary">P/C</name>
</gene>
<keyword id="KW-0175">Coiled coil</keyword>
<keyword id="KW-0597">Phosphoprotein</keyword>
<keyword id="KW-0693">Viral RNA replication</keyword>
<protein>
    <recommendedName>
        <fullName>Phosphoprotein</fullName>
        <shortName>Protein P</shortName>
    </recommendedName>
</protein>
<name>PHOSP_PI1HB</name>
<reference key="1">
    <citation type="journal article" date="1992" name="Virology">
        <title>The P genes of human parainfluenza virus type 1 clinical isolates are polycistronic and microheterogeneous.</title>
        <authorList>
            <person name="Power U.F."/>
            <person name="Ryan K.W."/>
            <person name="Portner A."/>
        </authorList>
    </citation>
    <scope>NUCLEOTIDE SEQUENCE [GENOMIC RNA]</scope>
</reference>
<proteinExistence type="inferred from homology"/>
<feature type="chain" id="PRO_0000142699" description="Phosphoprotein">
    <location>
        <begin position="1"/>
        <end position="568"/>
    </location>
</feature>
<feature type="region of interest" description="Disordered" evidence="5">
    <location>
        <begin position="1"/>
        <end position="24"/>
    </location>
</feature>
<feature type="region of interest" description="N0 binding" evidence="1">
    <location>
        <begin position="33"/>
        <end position="41"/>
    </location>
</feature>
<feature type="region of interest" description="Disordered" evidence="5">
    <location>
        <begin position="45"/>
        <end position="324"/>
    </location>
</feature>
<feature type="region of interest" description="Multimerization" evidence="2">
    <location>
        <begin position="344"/>
        <end position="411"/>
    </location>
</feature>
<feature type="region of interest" description="L protein binding" evidence="1">
    <location>
        <begin position="412"/>
        <end position="445"/>
    </location>
</feature>
<feature type="region of interest" description="Disordered" evidence="5">
    <location>
        <begin position="434"/>
        <end position="455"/>
    </location>
</feature>
<feature type="region of interest" description="Interaction with the nucleocapsid (N-RNA)" evidence="1">
    <location>
        <begin position="479"/>
        <end position="568"/>
    </location>
</feature>
<feature type="coiled-coil region" evidence="4">
    <location>
        <begin position="387"/>
        <end position="416"/>
    </location>
</feature>
<feature type="compositionally biased region" description="Basic and acidic residues" evidence="5">
    <location>
        <begin position="7"/>
        <end position="24"/>
    </location>
</feature>
<feature type="compositionally biased region" description="Basic and acidic residues" evidence="5">
    <location>
        <begin position="56"/>
        <end position="105"/>
    </location>
</feature>
<feature type="compositionally biased region" description="Basic and acidic residues" evidence="5">
    <location>
        <begin position="132"/>
        <end position="144"/>
    </location>
</feature>
<feature type="compositionally biased region" description="Basic and acidic residues" evidence="5">
    <location>
        <begin position="151"/>
        <end position="167"/>
    </location>
</feature>
<feature type="compositionally biased region" description="Polar residues" evidence="5">
    <location>
        <begin position="190"/>
        <end position="208"/>
    </location>
</feature>
<feature type="compositionally biased region" description="Basic and acidic residues" evidence="5">
    <location>
        <begin position="239"/>
        <end position="253"/>
    </location>
</feature>
<feature type="compositionally biased region" description="Polar residues" evidence="5">
    <location>
        <begin position="294"/>
        <end position="305"/>
    </location>
</feature>
<feature type="compositionally biased region" description="Polar residues" evidence="5">
    <location>
        <begin position="441"/>
        <end position="450"/>
    </location>
</feature>